<reference key="1">
    <citation type="journal article" date="2007" name="Proc. Natl. Acad. Sci. U.S.A.">
        <title>Independent sorting-out of thousands of duplicated gene pairs in two yeast species descended from a whole-genome duplication.</title>
        <authorList>
            <person name="Scannell D.R."/>
            <person name="Frank A.C."/>
            <person name="Conant G.C."/>
            <person name="Byrne K.P."/>
            <person name="Woolfit M."/>
            <person name="Wolfe K.H."/>
        </authorList>
    </citation>
    <scope>NUCLEOTIDE SEQUENCE [LARGE SCALE GENOMIC DNA]</scope>
    <source>
        <strain>ATCC 22028 / DSM 70294 / BCRC 21397 / CBS 2163 / NBRC 10782 / NRRL Y-8283 / UCD 57-17</strain>
    </source>
</reference>
<name>ASA1_VANPO</name>
<sequence>MATKVTLSEYTLRFHKDAVTDVKTVVDLTNFKVPVLISGDGSGKLVIWNVITRRVQFVYEIPKSPQILAIEYLGDLLVAVLSKDHKLRILQLQLDESKTLVKTNEQSQIQQQLYKYNIVFEVPVNTLNFANFSLEKIAPEEYRLVCCNTQNAESIDIYAFKLNRLNSLKRLNKGINFYKTVIDLLRNTEISKFDKLGIVMKFLRVNDLVYCGFESGIIICFRYKLRQEVMTTKYNETSSKQSKLQELIKSEDTDISIYENMLEIVYISTVHYPNPILDLSISAKDEETVLSSSTDSKIGIHKAQITNGNVSLPDNEGYIIDDSKQVIVRKTLGADTSFVEVPVTEIGSIKSLKCGMVLGGWNGKAIVVDNNNEILKIVGRTKSNILVNESAIRSIQNDSDSIIKMKKNYKIKAVDGIDGVGTDISQLSNISRGDQRRLDKFLSSSWCIVGFDDGCITLDSI</sequence>
<evidence type="ECO:0000250" key="1"/>
<evidence type="ECO:0000305" key="2"/>
<comment type="function">
    <text evidence="1">Component of the ASTRA complex involved in chromatin remodeling.</text>
</comment>
<comment type="subunit">
    <text evidence="1">Component of the ASTRA chromatin remodeling machinery complex.</text>
</comment>
<comment type="subcellular location">
    <subcellularLocation>
        <location evidence="1">Nucleus</location>
    </subcellularLocation>
</comment>
<comment type="similarity">
    <text evidence="2">Belongs to the WD repeat ASA1 family.</text>
</comment>
<accession>A7TKC6</accession>
<protein>
    <recommendedName>
        <fullName>ASTRA-associated protein 1</fullName>
    </recommendedName>
</protein>
<keyword id="KW-0156">Chromatin regulator</keyword>
<keyword id="KW-0539">Nucleus</keyword>
<keyword id="KW-1185">Reference proteome</keyword>
<keyword id="KW-0677">Repeat</keyword>
<keyword id="KW-0853">WD repeat</keyword>
<organism>
    <name type="scientific">Vanderwaltozyma polyspora (strain ATCC 22028 / DSM 70294 / BCRC 21397 / CBS 2163 / NBRC 10782 / NRRL Y-8283 / UCD 57-17)</name>
    <name type="common">Kluyveromyces polysporus</name>
    <dbReference type="NCBI Taxonomy" id="436907"/>
    <lineage>
        <taxon>Eukaryota</taxon>
        <taxon>Fungi</taxon>
        <taxon>Dikarya</taxon>
        <taxon>Ascomycota</taxon>
        <taxon>Saccharomycotina</taxon>
        <taxon>Saccharomycetes</taxon>
        <taxon>Saccharomycetales</taxon>
        <taxon>Saccharomycetaceae</taxon>
        <taxon>Vanderwaltozyma</taxon>
    </lineage>
</organism>
<dbReference type="EMBL" id="DS480407">
    <property type="protein sequence ID" value="EDO17253.1"/>
    <property type="molecule type" value="Genomic_DNA"/>
</dbReference>
<dbReference type="RefSeq" id="XP_001645111.1">
    <property type="nucleotide sequence ID" value="XM_001645061.1"/>
</dbReference>
<dbReference type="FunCoup" id="A7TKC6">
    <property type="interactions" value="63"/>
</dbReference>
<dbReference type="STRING" id="436907.A7TKC6"/>
<dbReference type="GeneID" id="5545459"/>
<dbReference type="KEGG" id="vpo:Kpol_538p13"/>
<dbReference type="eggNOG" id="ENOG502QU4T">
    <property type="taxonomic scope" value="Eukaryota"/>
</dbReference>
<dbReference type="HOGENOM" id="CLU_045414_1_0_1"/>
<dbReference type="InParanoid" id="A7TKC6"/>
<dbReference type="OMA" id="LVCCNTQ"/>
<dbReference type="OrthoDB" id="7668193at2759"/>
<dbReference type="PhylomeDB" id="A7TKC6"/>
<dbReference type="Proteomes" id="UP000000267">
    <property type="component" value="Unassembled WGS sequence"/>
</dbReference>
<dbReference type="GO" id="GO:0005634">
    <property type="term" value="C:nucleus"/>
    <property type="evidence" value="ECO:0007669"/>
    <property type="project" value="UniProtKB-SubCell"/>
</dbReference>
<dbReference type="GO" id="GO:0006325">
    <property type="term" value="P:chromatin organization"/>
    <property type="evidence" value="ECO:0007669"/>
    <property type="project" value="UniProtKB-KW"/>
</dbReference>
<dbReference type="Gene3D" id="2.130.10.10">
    <property type="entry name" value="YVTN repeat-like/Quinoprotein amine dehydrogenase"/>
    <property type="match status" value="1"/>
</dbReference>
<dbReference type="InterPro" id="IPR015943">
    <property type="entry name" value="WD40/YVTN_repeat-like_dom_sf"/>
</dbReference>
<dbReference type="InterPro" id="IPR036322">
    <property type="entry name" value="WD40_repeat_dom_sf"/>
</dbReference>
<dbReference type="SUPFAM" id="SSF50978">
    <property type="entry name" value="WD40 repeat-like"/>
    <property type="match status" value="1"/>
</dbReference>
<feature type="chain" id="PRO_0000402222" description="ASTRA-associated protein 1">
    <location>
        <begin position="1"/>
        <end position="461"/>
    </location>
</feature>
<feature type="repeat" description="WD 1">
    <location>
        <begin position="14"/>
        <end position="58"/>
    </location>
</feature>
<feature type="repeat" description="WD 2">
    <location>
        <begin position="84"/>
        <end position="123"/>
    </location>
</feature>
<feature type="repeat" description="WD 3">
    <location>
        <begin position="224"/>
        <end position="268"/>
    </location>
</feature>
<feature type="repeat" description="WD 4">
    <location>
        <begin position="271"/>
        <end position="311"/>
    </location>
</feature>
<gene>
    <name type="primary">ASA1</name>
    <name type="ORF">Kpol_538p13</name>
</gene>
<proteinExistence type="inferred from homology"/>